<organism>
    <name type="scientific">Chlamydomonas reinhardtii</name>
    <name type="common">Chlamydomonas smithii</name>
    <dbReference type="NCBI Taxonomy" id="3055"/>
    <lineage>
        <taxon>Eukaryota</taxon>
        <taxon>Viridiplantae</taxon>
        <taxon>Chlorophyta</taxon>
        <taxon>core chlorophytes</taxon>
        <taxon>Chlorophyceae</taxon>
        <taxon>CS clade</taxon>
        <taxon>Chlamydomonadales</taxon>
        <taxon>Chlamydomonadaceae</taxon>
        <taxon>Chlamydomonas</taxon>
    </lineage>
</organism>
<gene>
    <name type="primary">rpoC1A</name>
</gene>
<comment type="function">
    <text evidence="1">DNA-dependent RNA polymerase catalyzes the transcription of DNA into RNA using the four ribonucleoside triphosphates as substrates.</text>
</comment>
<comment type="catalytic activity">
    <reaction evidence="2">
        <text>RNA(n) + a ribonucleoside 5'-triphosphate = RNA(n+1) + diphosphate</text>
        <dbReference type="Rhea" id="RHEA:21248"/>
        <dbReference type="Rhea" id="RHEA-COMP:14527"/>
        <dbReference type="Rhea" id="RHEA-COMP:17342"/>
        <dbReference type="ChEBI" id="CHEBI:33019"/>
        <dbReference type="ChEBI" id="CHEBI:61557"/>
        <dbReference type="ChEBI" id="CHEBI:140395"/>
        <dbReference type="EC" id="2.7.7.6"/>
    </reaction>
</comment>
<comment type="cofactor">
    <cofactor evidence="2">
        <name>Zn(2+)</name>
        <dbReference type="ChEBI" id="CHEBI:29105"/>
    </cofactor>
    <text evidence="2">Binds 1 Zn(2+) ion per subunit.</text>
</comment>
<comment type="subunit">
    <text evidence="1">In plastids the minimal PEP RNA polymerase catalytic core is composed of four subunits: alpha, beta, beta', and beta''. When a (nuclear-encoded) sigma factor is associated with the core the holoenzyme is formed, which can initiate transcription (By similarity).</text>
</comment>
<comment type="subcellular location">
    <subcellularLocation>
        <location>Plastid</location>
        <location>Chloroplast</location>
    </subcellularLocation>
</comment>
<comment type="miscellaneous">
    <text>In C.reinhardtii the gene for this protein is split in two.</text>
</comment>
<comment type="similarity">
    <text evidence="3">Belongs to the RNA polymerase beta' chain family. RpoC1 subfamily.</text>
</comment>
<comment type="sequence caution" evidence="3">
    <conflict type="frameshift">
        <sequence resource="EMBL-CDS" id="ACJ50157"/>
    </conflict>
</comment>
<name>RPC1A_CHLRE</name>
<protein>
    <recommendedName>
        <fullName>DNA-directed RNA polymerase subunit beta' N-terminal section</fullName>
        <ecNumber>2.7.7.6</ecNumber>
    </recommendedName>
    <alternativeName>
        <fullName>PEP</fullName>
    </alternativeName>
    <alternativeName>
        <fullName>Plastid-encoded RNA polymerase beta' N-terminal section</fullName>
        <shortName>RNA polymerase beta' N-terminal section</shortName>
    </alternativeName>
</protein>
<reference key="1">
    <citation type="journal article" date="2002" name="Plant Cell">
        <title>The Chlamydomonas reinhardtii plastid chromosome: islands of genes in a sea of repeats.</title>
        <authorList>
            <person name="Maul J.E."/>
            <person name="Lilly J.W."/>
            <person name="Cui L."/>
            <person name="dePamphilis C.W."/>
            <person name="Miller W."/>
            <person name="Harris E.H."/>
            <person name="Stern D.B."/>
        </authorList>
    </citation>
    <scope>NUCLEOTIDE SEQUENCE [LARGE SCALE GENOMIC DNA]</scope>
    <scope>IDENTIFICATION</scope>
    <scope>COMPLETE PLASTID GENOME</scope>
</reference>
<reference key="2">
    <citation type="journal article" date="2009" name="BMC Evol. Biol.">
        <title>Nucleotide diversity of the Chlamydomonas reinhardtii plastid genome: addressing the mutational-hazard hypothesis.</title>
        <authorList>
            <person name="Smith D.R."/>
            <person name="Lee R.W."/>
        </authorList>
    </citation>
    <scope>NUCLEOTIDE SEQUENCE [LARGE SCALE GENOMIC DNA]</scope>
    <source>
        <strain>CC-503</strain>
    </source>
</reference>
<keyword id="KW-0150">Chloroplast</keyword>
<keyword id="KW-0240">DNA-directed RNA polymerase</keyword>
<keyword id="KW-0479">Metal-binding</keyword>
<keyword id="KW-0548">Nucleotidyltransferase</keyword>
<keyword id="KW-0934">Plastid</keyword>
<keyword id="KW-1185">Reference proteome</keyword>
<keyword id="KW-0804">Transcription</keyword>
<keyword id="KW-0808">Transferase</keyword>
<keyword id="KW-0862">Zinc</keyword>
<feature type="chain" id="PRO_0000067866" description="DNA-directed RNA polymerase subunit beta' N-terminal section">
    <location>
        <begin position="1"/>
        <end position="603"/>
    </location>
</feature>
<feature type="binding site" evidence="2">
    <location>
        <position position="283"/>
    </location>
    <ligand>
        <name>Zn(2+)</name>
        <dbReference type="ChEBI" id="CHEBI:29105"/>
    </ligand>
</feature>
<feature type="binding site" evidence="2">
    <location>
        <position position="285"/>
    </location>
    <ligand>
        <name>Zn(2+)</name>
        <dbReference type="ChEBI" id="CHEBI:29105"/>
    </ligand>
</feature>
<feature type="binding site" evidence="2">
    <location>
        <position position="329"/>
    </location>
    <ligand>
        <name>Zn(2+)</name>
        <dbReference type="ChEBI" id="CHEBI:29105"/>
    </ligand>
</feature>
<feature type="binding site" evidence="2">
    <location>
        <position position="332"/>
    </location>
    <ligand>
        <name>Zn(2+)</name>
        <dbReference type="ChEBI" id="CHEBI:29105"/>
    </ligand>
</feature>
<geneLocation type="chloroplast"/>
<proteinExistence type="evidence at transcript level"/>
<sequence length="603" mass="68613">MHYKKYAELLKNGTYFSHIHSPTLLYPKGKVMYAQYGNSPLQGLNSQVTNLNLIRKVVAASAEMDSFKKLPNLQNNKLPLNNLKARLNTKAIYISNEEAQLTVSKIGTPNAIETDVPGTIKNAPSNTLLTHRSFKFFVNKIYAKPLISLKKTKETKPLLLGKTGTTLTQKGLNPFQSLFLNTKSSSPSTARSFGTKNIVNTLQIKKIVHKFENSYSKLTEINLITINLASANRIRQWAEKTLPNGKVVGEVINPETIHYKTLKPIKGGLFCERIFGPLKDHECACGKKFNIKNYLTKTVNNSSIQPIAESRQTQPNTQLSLNLQKRYFCRICDVEYTYSIIRRTQLGYIQLASPTTHVWFVKGIPSYISILLDMKKKHLQGITYNTETLTLENSFRGRQLLPVSPSSIFESWQKIMKKQYPEKYNLTNTMIKIKSTNTLPLRVSQPNSNTSYSYMPNIYIPEGEGEEKTKTKLKKTTPLNAIAQKGVKYKKPKTKKALYKQYLKNYYARKPKNSNQAEAVSFGVNKVQLPLTAFQQRNKVYFYKSEKRNWPVLTTVAKMQYIVSKKGWFKLIQYVIKSAESYGAATPTKMDGLQKMSLLTKQA</sequence>
<accession>Q8HUG9</accession>
<accession>B7U1L0</accession>
<dbReference type="EC" id="2.7.7.6"/>
<dbReference type="EMBL" id="AF541870">
    <property type="protein sequence ID" value="AAN17822.1"/>
    <property type="molecule type" value="Genomic_DNA"/>
</dbReference>
<dbReference type="EMBL" id="FJ423446">
    <property type="protein sequence ID" value="ACJ50157.1"/>
    <property type="status" value="ALT_FRAME"/>
    <property type="molecule type" value="Genomic_DNA"/>
</dbReference>
<dbReference type="EMBL" id="BK000554">
    <property type="protein sequence ID" value="DAA00970.1"/>
    <property type="molecule type" value="Genomic_DNA"/>
</dbReference>
<dbReference type="RefSeq" id="NP_958426.1">
    <property type="nucleotide sequence ID" value="NC_005353.1"/>
</dbReference>
<dbReference type="STRING" id="3055.Q8HUG9"/>
<dbReference type="PaxDb" id="3055-DAA00970"/>
<dbReference type="GeneID" id="2717050"/>
<dbReference type="KEGG" id="cre:ChreCp070"/>
<dbReference type="eggNOG" id="ENOG502QPYA">
    <property type="taxonomic scope" value="Eukaryota"/>
</dbReference>
<dbReference type="HOGENOM" id="CLU_452974_0_0_1"/>
<dbReference type="InParanoid" id="Q8HUG9"/>
<dbReference type="Proteomes" id="UP000006906">
    <property type="component" value="Chloroplast"/>
</dbReference>
<dbReference type="GO" id="GO:0009507">
    <property type="term" value="C:chloroplast"/>
    <property type="evidence" value="ECO:0007669"/>
    <property type="project" value="UniProtKB-SubCell"/>
</dbReference>
<dbReference type="GO" id="GO:0000428">
    <property type="term" value="C:DNA-directed RNA polymerase complex"/>
    <property type="evidence" value="ECO:0007669"/>
    <property type="project" value="UniProtKB-KW"/>
</dbReference>
<dbReference type="GO" id="GO:0005739">
    <property type="term" value="C:mitochondrion"/>
    <property type="evidence" value="ECO:0007669"/>
    <property type="project" value="GOC"/>
</dbReference>
<dbReference type="GO" id="GO:0003677">
    <property type="term" value="F:DNA binding"/>
    <property type="evidence" value="ECO:0007669"/>
    <property type="project" value="InterPro"/>
</dbReference>
<dbReference type="GO" id="GO:0003899">
    <property type="term" value="F:DNA-directed RNA polymerase activity"/>
    <property type="evidence" value="ECO:0007669"/>
    <property type="project" value="UniProtKB-EC"/>
</dbReference>
<dbReference type="GO" id="GO:0046872">
    <property type="term" value="F:metal ion binding"/>
    <property type="evidence" value="ECO:0007669"/>
    <property type="project" value="UniProtKB-KW"/>
</dbReference>
<dbReference type="GO" id="GO:0006351">
    <property type="term" value="P:DNA-templated transcription"/>
    <property type="evidence" value="ECO:0007669"/>
    <property type="project" value="InterPro"/>
</dbReference>
<dbReference type="Gene3D" id="4.10.860.120">
    <property type="entry name" value="RNA polymerase II, clamp domain"/>
    <property type="match status" value="1"/>
</dbReference>
<dbReference type="InterPro" id="IPR007080">
    <property type="entry name" value="RNA_pol_Rpb1_1"/>
</dbReference>
<dbReference type="InterPro" id="IPR044893">
    <property type="entry name" value="RNA_pol_Rpb1_clamp_domain"/>
</dbReference>
<dbReference type="InterPro" id="IPR015700">
    <property type="entry name" value="RPC1"/>
</dbReference>
<dbReference type="PANTHER" id="PTHR48446">
    <property type="entry name" value="DNA-DIRECTED RNA POLYMERASE SUBUNIT BETA' N-TERMINAL SECTION"/>
    <property type="match status" value="1"/>
</dbReference>
<dbReference type="PANTHER" id="PTHR48446:SF1">
    <property type="entry name" value="DNA-DIRECTED RNA POLYMERASE SUBUNIT BETA' N-TERMINAL SECTION"/>
    <property type="match status" value="1"/>
</dbReference>
<dbReference type="Pfam" id="PF04997">
    <property type="entry name" value="RNA_pol_Rpb1_1"/>
    <property type="match status" value="1"/>
</dbReference>
<dbReference type="SUPFAM" id="SSF64484">
    <property type="entry name" value="beta and beta-prime subunits of DNA dependent RNA-polymerase"/>
    <property type="match status" value="1"/>
</dbReference>
<evidence type="ECO:0000250" key="1"/>
<evidence type="ECO:0000250" key="2">
    <source>
        <dbReference type="UniProtKB" id="P0A8T7"/>
    </source>
</evidence>
<evidence type="ECO:0000305" key="3"/>